<name>C1TM_HUMAN</name>
<sequence>MGTRLPLVLRQLRRPPQPPGPPRRLRVPCRASSGGGGGGGGGREGLLGQRRPQDGQARSSCSPGGRTPAARDSIVREVIQNSKEVLSLLQEKNPAFKPVLAIIQAGDDNLMQEINQNLAEEAGLNITHICLPPDSSEAEIIDEILKINEDTRVHGLALQISENLFSNKVLNALKPEKDVDGVTDINLGKLVRGDAHECFVSPVAKAVIELLEKSGVNLDGKKILVVGAHGSLEAALQCLFQRKGSMTMSIQWKTRQLQSKLHEADIVVLGSPKPEEIPLTWIQPGTTVLNCSHDFLSGKVGCGSPRIHFGGLIEEDDVILLAAALRIQNMVSSGRRWLREQQHRRWRLHCLKLQPLSPVPSDIEISRGQTPKAVDVLAKEIGLLADEIEIYGKSKAKVRLSVLERLKDQADGKYVLVAGITPTPLGEGKSTVTIGLVQALTAHLNVNSFACLRQPSQGPTFGVKGGAAGGGYAQVIPMEEFNLHLTGDIHAITAANNLLAAAIDTRILHENTQTDKALYNRLVPLVNGVREFSEIQLARLKKLGINKTDPSTLTEEEVSKFARLDIDPSTITWQRVLDTNDRFLRKITIGQGNTEKGHYRQAQFDIAVASEIMAVLALTDSLADMKARLGRMVVASDKSGQPVTADDLGVTGALTVLMKDAIKPNLMQTLEGTPVFVHAGPFANIAHGNSSVLADKIALKLVGEEGFVVTEAGFGADIGMEKFFNIKCRASGLVPNVVVLVATVRALKMHGGGPSVTAGVPLKKEYTEENIQLVADGCCNLQKQIQITQLFGVPVVVALNVFKTDTRAEIDLVCELAKRAGAFDAVPCYHWSVGGKGSVDLARAVREAASKRSRFQFLYDVQVPIVDKIRTIAQAVYGAKDIELSPEAQAKIDRYTQQGFGNLPICMAKTHLSLSHQPDKKGVPRDFILPISDVRASIGAGFIYPLVGTMSTMPGLPTRPCFYDIDLDTETEQVKGLF</sequence>
<reference key="1">
    <citation type="journal article" date="2003" name="J. Biol. Chem.">
        <title>Human mitochondrial C1-tetrahydrofolate synthase: gene structure, tissue distribution of the mRNA, and immunolocalization in Chinese hamster ovary calls.</title>
        <authorList>
            <person name="Prasannan P."/>
            <person name="Pike S."/>
            <person name="Peng K."/>
            <person name="Shane B."/>
            <person name="Appling D.R."/>
        </authorList>
    </citation>
    <scope>NUCLEOTIDE SEQUENCE [MRNA] (ISOFORMS 1 AND 2)</scope>
    <scope>SUBCELLULAR LOCATION</scope>
    <scope>TISSUE SPECIFICITY</scope>
</reference>
<reference key="2">
    <citation type="journal article" date="2004" name="Biochem. Biophys. Res. Commun.">
        <title>A novel mitochondrial C1-tetrahydrofolate synthetase is upregulated in human colon adenocarcinoma.</title>
        <authorList>
            <person name="Sugiura T."/>
            <person name="Nagano Y."/>
            <person name="Inoue T."/>
            <person name="Hirotani K."/>
        </authorList>
    </citation>
    <scope>NUCLEOTIDE SEQUENCE [MRNA] (ISOFORM 1)</scope>
    <scope>TISSUE SPECIFICITY</scope>
    <source>
        <tissue>Testis</tissue>
    </source>
</reference>
<reference key="3">
    <citation type="submission" date="2005-09" db="EMBL/GenBank/DDBJ databases">
        <authorList>
            <person name="Mural R.J."/>
            <person name="Istrail S."/>
            <person name="Sutton G.G."/>
            <person name="Florea L."/>
            <person name="Halpern A.L."/>
            <person name="Mobarry C.M."/>
            <person name="Lippert R."/>
            <person name="Walenz B."/>
            <person name="Shatkay H."/>
            <person name="Dew I."/>
            <person name="Miller J.R."/>
            <person name="Flanigan M.J."/>
            <person name="Edwards N.J."/>
            <person name="Bolanos R."/>
            <person name="Fasulo D."/>
            <person name="Halldorsson B.V."/>
            <person name="Hannenhalli S."/>
            <person name="Turner R."/>
            <person name="Yooseph S."/>
            <person name="Lu F."/>
            <person name="Nusskern D.R."/>
            <person name="Shue B.C."/>
            <person name="Zheng X.H."/>
            <person name="Zhong F."/>
            <person name="Delcher A.L."/>
            <person name="Huson D.H."/>
            <person name="Kravitz S.A."/>
            <person name="Mouchard L."/>
            <person name="Reinert K."/>
            <person name="Remington K.A."/>
            <person name="Clark A.G."/>
            <person name="Waterman M.S."/>
            <person name="Eichler E.E."/>
            <person name="Adams M.D."/>
            <person name="Hunkapiller M.W."/>
            <person name="Myers E.W."/>
            <person name="Venter J.C."/>
        </authorList>
    </citation>
    <scope>NUCLEOTIDE SEQUENCE [LARGE SCALE GENOMIC DNA]</scope>
</reference>
<reference key="4">
    <citation type="journal article" date="2003" name="Nature">
        <title>The DNA sequence and analysis of human chromosome 6.</title>
        <authorList>
            <person name="Mungall A.J."/>
            <person name="Palmer S.A."/>
            <person name="Sims S.K."/>
            <person name="Edwards C.A."/>
            <person name="Ashurst J.L."/>
            <person name="Wilming L."/>
            <person name="Jones M.C."/>
            <person name="Horton R."/>
            <person name="Hunt S.E."/>
            <person name="Scott C.E."/>
            <person name="Gilbert J.G.R."/>
            <person name="Clamp M.E."/>
            <person name="Bethel G."/>
            <person name="Milne S."/>
            <person name="Ainscough R."/>
            <person name="Almeida J.P."/>
            <person name="Ambrose K.D."/>
            <person name="Andrews T.D."/>
            <person name="Ashwell R.I.S."/>
            <person name="Babbage A.K."/>
            <person name="Bagguley C.L."/>
            <person name="Bailey J."/>
            <person name="Banerjee R."/>
            <person name="Barker D.J."/>
            <person name="Barlow K.F."/>
            <person name="Bates K."/>
            <person name="Beare D.M."/>
            <person name="Beasley H."/>
            <person name="Beasley O."/>
            <person name="Bird C.P."/>
            <person name="Blakey S.E."/>
            <person name="Bray-Allen S."/>
            <person name="Brook J."/>
            <person name="Brown A.J."/>
            <person name="Brown J.Y."/>
            <person name="Burford D.C."/>
            <person name="Burrill W."/>
            <person name="Burton J."/>
            <person name="Carder C."/>
            <person name="Carter N.P."/>
            <person name="Chapman J.C."/>
            <person name="Clark S.Y."/>
            <person name="Clark G."/>
            <person name="Clee C.M."/>
            <person name="Clegg S."/>
            <person name="Cobley V."/>
            <person name="Collier R.E."/>
            <person name="Collins J.E."/>
            <person name="Colman L.K."/>
            <person name="Corby N.R."/>
            <person name="Coville G.J."/>
            <person name="Culley K.M."/>
            <person name="Dhami P."/>
            <person name="Davies J."/>
            <person name="Dunn M."/>
            <person name="Earthrowl M.E."/>
            <person name="Ellington A.E."/>
            <person name="Evans K.A."/>
            <person name="Faulkner L."/>
            <person name="Francis M.D."/>
            <person name="Frankish A."/>
            <person name="Frankland J."/>
            <person name="French L."/>
            <person name="Garner P."/>
            <person name="Garnett J."/>
            <person name="Ghori M.J."/>
            <person name="Gilby L.M."/>
            <person name="Gillson C.J."/>
            <person name="Glithero R.J."/>
            <person name="Grafham D.V."/>
            <person name="Grant M."/>
            <person name="Gribble S."/>
            <person name="Griffiths C."/>
            <person name="Griffiths M.N.D."/>
            <person name="Hall R."/>
            <person name="Halls K.S."/>
            <person name="Hammond S."/>
            <person name="Harley J.L."/>
            <person name="Hart E.A."/>
            <person name="Heath P.D."/>
            <person name="Heathcott R."/>
            <person name="Holmes S.J."/>
            <person name="Howden P.J."/>
            <person name="Howe K.L."/>
            <person name="Howell G.R."/>
            <person name="Huckle E."/>
            <person name="Humphray S.J."/>
            <person name="Humphries M.D."/>
            <person name="Hunt A.R."/>
            <person name="Johnson C.M."/>
            <person name="Joy A.A."/>
            <person name="Kay M."/>
            <person name="Keenan S.J."/>
            <person name="Kimberley A.M."/>
            <person name="King A."/>
            <person name="Laird G.K."/>
            <person name="Langford C."/>
            <person name="Lawlor S."/>
            <person name="Leongamornlert D.A."/>
            <person name="Leversha M."/>
            <person name="Lloyd C.R."/>
            <person name="Lloyd D.M."/>
            <person name="Loveland J.E."/>
            <person name="Lovell J."/>
            <person name="Martin S."/>
            <person name="Mashreghi-Mohammadi M."/>
            <person name="Maslen G.L."/>
            <person name="Matthews L."/>
            <person name="McCann O.T."/>
            <person name="McLaren S.J."/>
            <person name="McLay K."/>
            <person name="McMurray A."/>
            <person name="Moore M.J.F."/>
            <person name="Mullikin J.C."/>
            <person name="Niblett D."/>
            <person name="Nickerson T."/>
            <person name="Novik K.L."/>
            <person name="Oliver K."/>
            <person name="Overton-Larty E.K."/>
            <person name="Parker A."/>
            <person name="Patel R."/>
            <person name="Pearce A.V."/>
            <person name="Peck A.I."/>
            <person name="Phillimore B.J.C.T."/>
            <person name="Phillips S."/>
            <person name="Plumb R.W."/>
            <person name="Porter K.M."/>
            <person name="Ramsey Y."/>
            <person name="Ranby S.A."/>
            <person name="Rice C.M."/>
            <person name="Ross M.T."/>
            <person name="Searle S.M."/>
            <person name="Sehra H.K."/>
            <person name="Sheridan E."/>
            <person name="Skuce C.D."/>
            <person name="Smith S."/>
            <person name="Smith M."/>
            <person name="Spraggon L."/>
            <person name="Squares S.L."/>
            <person name="Steward C.A."/>
            <person name="Sycamore N."/>
            <person name="Tamlyn-Hall G."/>
            <person name="Tester J."/>
            <person name="Theaker A.J."/>
            <person name="Thomas D.W."/>
            <person name="Thorpe A."/>
            <person name="Tracey A."/>
            <person name="Tromans A."/>
            <person name="Tubby B."/>
            <person name="Wall M."/>
            <person name="Wallis J.M."/>
            <person name="West A.P."/>
            <person name="White S.S."/>
            <person name="Whitehead S.L."/>
            <person name="Whittaker H."/>
            <person name="Wild A."/>
            <person name="Willey D.J."/>
            <person name="Wilmer T.E."/>
            <person name="Wood J.M."/>
            <person name="Wray P.W."/>
            <person name="Wyatt J.C."/>
            <person name="Young L."/>
            <person name="Younger R.M."/>
            <person name="Bentley D.R."/>
            <person name="Coulson A."/>
            <person name="Durbin R.M."/>
            <person name="Hubbard T."/>
            <person name="Sulston J.E."/>
            <person name="Dunham I."/>
            <person name="Rogers J."/>
            <person name="Beck S."/>
        </authorList>
    </citation>
    <scope>NUCLEOTIDE SEQUENCE [LARGE SCALE GENOMIC DNA]</scope>
</reference>
<reference key="5">
    <citation type="journal article" date="2005" name="Arch. Biochem. Biophys.">
        <title>Enzymatic characterization of human mitochondrial C1-tetrahydrofolate synthase.</title>
        <authorList>
            <person name="Walkup A.S."/>
            <person name="Appling D.R."/>
        </authorList>
    </citation>
    <scope>PROTEIN SEQUENCE OF 32-66</scope>
    <scope>FUNCTION</scope>
    <scope>CATALYTIC ACTIVITY</scope>
    <scope>SUBUNIT</scope>
    <scope>BIOPHYSICOCHEMICAL PROPERTIES</scope>
    <scope>PATHWAY</scope>
</reference>
<reference key="6">
    <citation type="journal article" date="2007" name="BMC Genomics">
        <title>The full-ORF clone resource of the German cDNA consortium.</title>
        <authorList>
            <person name="Bechtel S."/>
            <person name="Rosenfelder H."/>
            <person name="Duda A."/>
            <person name="Schmidt C.P."/>
            <person name="Ernst U."/>
            <person name="Wellenreuther R."/>
            <person name="Mehrle A."/>
            <person name="Schuster C."/>
            <person name="Bahr A."/>
            <person name="Bloecker H."/>
            <person name="Heubner D."/>
            <person name="Hoerlein A."/>
            <person name="Michel G."/>
            <person name="Wedler H."/>
            <person name="Koehrer K."/>
            <person name="Ottenwaelder B."/>
            <person name="Poustka A."/>
            <person name="Wiemann S."/>
            <person name="Schupp I."/>
        </authorList>
    </citation>
    <scope>NUCLEOTIDE SEQUENCE [LARGE SCALE MRNA] OF 62-978 (ISOFORM 1)</scope>
    <source>
        <tissue>Uterus</tissue>
    </source>
</reference>
<reference key="7">
    <citation type="journal article" date="2004" name="Genome Res.">
        <title>The status, quality, and expansion of the NIH full-length cDNA project: the Mammalian Gene Collection (MGC).</title>
        <authorList>
            <consortium name="The MGC Project Team"/>
        </authorList>
    </citation>
    <scope>NUCLEOTIDE SEQUENCE [LARGE SCALE MRNA] OF 79-978 (ISOFORM 1)</scope>
    <source>
        <tissue>Cervix</tissue>
        <tissue>Eye</tissue>
        <tissue>Muscle</tissue>
    </source>
</reference>
<reference key="8">
    <citation type="submission" date="2007-07" db="UniProtKB">
        <authorList>
            <person name="Bienvenut W.V."/>
            <person name="Matallanas D."/>
            <person name="Cooper W.N."/>
            <person name="Kolch W."/>
        </authorList>
    </citation>
    <scope>PROTEIN SEQUENCE OF 522-530; 564-575 AND 926-935</scope>
    <scope>IDENTIFICATION BY MASS SPECTROMETRY</scope>
    <source>
        <tissue>Mammary carcinoma</tissue>
    </source>
</reference>
<reference key="9">
    <citation type="journal article" date="2004" name="Nat. Genet.">
        <title>Complete sequencing and characterization of 21,243 full-length human cDNAs.</title>
        <authorList>
            <person name="Ota T."/>
            <person name="Suzuki Y."/>
            <person name="Nishikawa T."/>
            <person name="Otsuki T."/>
            <person name="Sugiyama T."/>
            <person name="Irie R."/>
            <person name="Wakamatsu A."/>
            <person name="Hayashi K."/>
            <person name="Sato H."/>
            <person name="Nagai K."/>
            <person name="Kimura K."/>
            <person name="Makita H."/>
            <person name="Sekine M."/>
            <person name="Obayashi M."/>
            <person name="Nishi T."/>
            <person name="Shibahara T."/>
            <person name="Tanaka T."/>
            <person name="Ishii S."/>
            <person name="Yamamoto J."/>
            <person name="Saito K."/>
            <person name="Kawai Y."/>
            <person name="Isono Y."/>
            <person name="Nakamura Y."/>
            <person name="Nagahari K."/>
            <person name="Murakami K."/>
            <person name="Yasuda T."/>
            <person name="Iwayanagi T."/>
            <person name="Wagatsuma M."/>
            <person name="Shiratori A."/>
            <person name="Sudo H."/>
            <person name="Hosoiri T."/>
            <person name="Kaku Y."/>
            <person name="Kodaira H."/>
            <person name="Kondo H."/>
            <person name="Sugawara M."/>
            <person name="Takahashi M."/>
            <person name="Kanda K."/>
            <person name="Yokoi T."/>
            <person name="Furuya T."/>
            <person name="Kikkawa E."/>
            <person name="Omura Y."/>
            <person name="Abe K."/>
            <person name="Kamihara K."/>
            <person name="Katsuta N."/>
            <person name="Sato K."/>
            <person name="Tanikawa M."/>
            <person name="Yamazaki M."/>
            <person name="Ninomiya K."/>
            <person name="Ishibashi T."/>
            <person name="Yamashita H."/>
            <person name="Murakawa K."/>
            <person name="Fujimori K."/>
            <person name="Tanai H."/>
            <person name="Kimata M."/>
            <person name="Watanabe M."/>
            <person name="Hiraoka S."/>
            <person name="Chiba Y."/>
            <person name="Ishida S."/>
            <person name="Ono Y."/>
            <person name="Takiguchi S."/>
            <person name="Watanabe S."/>
            <person name="Yosida M."/>
            <person name="Hotuta T."/>
            <person name="Kusano J."/>
            <person name="Kanehori K."/>
            <person name="Takahashi-Fujii A."/>
            <person name="Hara H."/>
            <person name="Tanase T.-O."/>
            <person name="Nomura Y."/>
            <person name="Togiya S."/>
            <person name="Komai F."/>
            <person name="Hara R."/>
            <person name="Takeuchi K."/>
            <person name="Arita M."/>
            <person name="Imose N."/>
            <person name="Musashino K."/>
            <person name="Yuuki H."/>
            <person name="Oshima A."/>
            <person name="Sasaki N."/>
            <person name="Aotsuka S."/>
            <person name="Yoshikawa Y."/>
            <person name="Matsunawa H."/>
            <person name="Ichihara T."/>
            <person name="Shiohata N."/>
            <person name="Sano S."/>
            <person name="Moriya S."/>
            <person name="Momiyama H."/>
            <person name="Satoh N."/>
            <person name="Takami S."/>
            <person name="Terashima Y."/>
            <person name="Suzuki O."/>
            <person name="Nakagawa S."/>
            <person name="Senoh A."/>
            <person name="Mizoguchi H."/>
            <person name="Goto Y."/>
            <person name="Shimizu F."/>
            <person name="Wakebe H."/>
            <person name="Hishigaki H."/>
            <person name="Watanabe T."/>
            <person name="Sugiyama A."/>
            <person name="Takemoto M."/>
            <person name="Kawakami B."/>
            <person name="Yamazaki M."/>
            <person name="Watanabe K."/>
            <person name="Kumagai A."/>
            <person name="Itakura S."/>
            <person name="Fukuzumi Y."/>
            <person name="Fujimori Y."/>
            <person name="Komiyama M."/>
            <person name="Tashiro H."/>
            <person name="Tanigami A."/>
            <person name="Fujiwara T."/>
            <person name="Ono T."/>
            <person name="Yamada K."/>
            <person name="Fujii Y."/>
            <person name="Ozaki K."/>
            <person name="Hirao M."/>
            <person name="Ohmori Y."/>
            <person name="Kawabata A."/>
            <person name="Hikiji T."/>
            <person name="Kobatake N."/>
            <person name="Inagaki H."/>
            <person name="Ikema Y."/>
            <person name="Okamoto S."/>
            <person name="Okitani R."/>
            <person name="Kawakami T."/>
            <person name="Noguchi S."/>
            <person name="Itoh T."/>
            <person name="Shigeta K."/>
            <person name="Senba T."/>
            <person name="Matsumura K."/>
            <person name="Nakajima Y."/>
            <person name="Mizuno T."/>
            <person name="Morinaga M."/>
            <person name="Sasaki M."/>
            <person name="Togashi T."/>
            <person name="Oyama M."/>
            <person name="Hata H."/>
            <person name="Watanabe M."/>
            <person name="Komatsu T."/>
            <person name="Mizushima-Sugano J."/>
            <person name="Satoh T."/>
            <person name="Shirai Y."/>
            <person name="Takahashi Y."/>
            <person name="Nakagawa K."/>
            <person name="Okumura K."/>
            <person name="Nagase T."/>
            <person name="Nomura N."/>
            <person name="Kikuchi H."/>
            <person name="Masuho Y."/>
            <person name="Yamashita R."/>
            <person name="Nakai K."/>
            <person name="Yada T."/>
            <person name="Nakamura Y."/>
            <person name="Ohara O."/>
            <person name="Isogai T."/>
            <person name="Sugano S."/>
        </authorList>
    </citation>
    <scope>NUCLEOTIDE SEQUENCE [LARGE SCALE MRNA] OF 591-978 (ISOFORM 1)</scope>
</reference>
<reference key="10">
    <citation type="journal article" date="2009" name="Science">
        <title>Lysine acetylation targets protein complexes and co-regulates major cellular functions.</title>
        <authorList>
            <person name="Choudhary C."/>
            <person name="Kumar C."/>
            <person name="Gnad F."/>
            <person name="Nielsen M.L."/>
            <person name="Rehman M."/>
            <person name="Walther T.C."/>
            <person name="Olsen J.V."/>
            <person name="Mann M."/>
        </authorList>
    </citation>
    <scope>ACETYLATION [LARGE SCALE ANALYSIS] AT LYS-189</scope>
    <scope>IDENTIFICATION BY MASS SPECTROMETRY [LARGE SCALE ANALYSIS]</scope>
</reference>
<reference key="11">
    <citation type="journal article" date="2011" name="BMC Syst. Biol.">
        <title>Initial characterization of the human central proteome.</title>
        <authorList>
            <person name="Burkard T.R."/>
            <person name="Planyavsky M."/>
            <person name="Kaupe I."/>
            <person name="Breitwieser F.P."/>
            <person name="Buerckstuemmer T."/>
            <person name="Bennett K.L."/>
            <person name="Superti-Furga G."/>
            <person name="Colinge J."/>
        </authorList>
    </citation>
    <scope>IDENTIFICATION BY MASS SPECTROMETRY [LARGE SCALE ANALYSIS]</scope>
</reference>
<reference key="12">
    <citation type="journal article" date="2013" name="J. Proteome Res.">
        <title>Toward a comprehensive characterization of a human cancer cell phosphoproteome.</title>
        <authorList>
            <person name="Zhou H."/>
            <person name="Di Palma S."/>
            <person name="Preisinger C."/>
            <person name="Peng M."/>
            <person name="Polat A.N."/>
            <person name="Heck A.J."/>
            <person name="Mohammed S."/>
        </authorList>
    </citation>
    <scope>PHOSPHORYLATION [LARGE SCALE ANALYSIS] AT SER-357</scope>
    <scope>IDENTIFICATION BY MASS SPECTROMETRY [LARGE SCALE ANALYSIS]</scope>
    <source>
        <tissue>Cervix carcinoma</tissue>
        <tissue>Erythroleukemia</tissue>
    </source>
</reference>
<reference key="13">
    <citation type="journal article" date="2015" name="Proteomics">
        <title>N-terminome analysis of the human mitochondrial proteome.</title>
        <authorList>
            <person name="Vaca Jacome A.S."/>
            <person name="Rabilloud T."/>
            <person name="Schaeffer-Reiss C."/>
            <person name="Rompais M."/>
            <person name="Ayoub D."/>
            <person name="Lane L."/>
            <person name="Bairoch A."/>
            <person name="Van Dorsselaer A."/>
            <person name="Carapito C."/>
        </authorList>
    </citation>
    <scope>IDENTIFICATION BY MASS SPECTROMETRY [LARGE SCALE ANALYSIS]</scope>
</reference>
<reference key="14">
    <citation type="journal article" date="2006" name="Science">
        <title>The consensus coding sequences of human breast and colorectal cancers.</title>
        <authorList>
            <person name="Sjoeblom T."/>
            <person name="Jones S."/>
            <person name="Wood L.D."/>
            <person name="Parsons D.W."/>
            <person name="Lin J."/>
            <person name="Barber T.D."/>
            <person name="Mandelker D."/>
            <person name="Leary R.J."/>
            <person name="Ptak J."/>
            <person name="Silliman N."/>
            <person name="Szabo S."/>
            <person name="Buckhaults P."/>
            <person name="Farrell C."/>
            <person name="Meeh P."/>
            <person name="Markowitz S.D."/>
            <person name="Willis J."/>
            <person name="Dawson D."/>
            <person name="Willson J.K.V."/>
            <person name="Gazdar A.F."/>
            <person name="Hartigan J."/>
            <person name="Wu L."/>
            <person name="Liu C."/>
            <person name="Parmigiani G."/>
            <person name="Park B.H."/>
            <person name="Bachman K.E."/>
            <person name="Papadopoulos N."/>
            <person name="Vogelstein B."/>
            <person name="Kinzler K.W."/>
            <person name="Velculescu V.E."/>
        </authorList>
    </citation>
    <scope>VARIANT [LARGE SCALE ANALYSIS] ARG-444</scope>
</reference>
<organism>
    <name type="scientific">Homo sapiens</name>
    <name type="common">Human</name>
    <dbReference type="NCBI Taxonomy" id="9606"/>
    <lineage>
        <taxon>Eukaryota</taxon>
        <taxon>Metazoa</taxon>
        <taxon>Chordata</taxon>
        <taxon>Craniata</taxon>
        <taxon>Vertebrata</taxon>
        <taxon>Euteleostomi</taxon>
        <taxon>Mammalia</taxon>
        <taxon>Eutheria</taxon>
        <taxon>Euarchontoglires</taxon>
        <taxon>Primates</taxon>
        <taxon>Haplorrhini</taxon>
        <taxon>Catarrhini</taxon>
        <taxon>Hominidae</taxon>
        <taxon>Homo</taxon>
    </lineage>
</organism>
<gene>
    <name evidence="12" type="primary">MTHFD1L</name>
    <name type="synonym">FTHFSDC1</name>
</gene>
<comment type="function">
    <text evidence="1 6">May provide the missing metabolic reaction required to link the mitochondria and the cytoplasm in the mammalian model of one-carbon folate metabolism complementing thus the enzymatic activities of MTHFD2.</text>
</comment>
<comment type="catalytic activity">
    <reaction evidence="6">
        <text>(6S)-5,6,7,8-tetrahydrofolate + formate + ATP = (6R)-10-formyltetrahydrofolate + ADP + phosphate</text>
        <dbReference type="Rhea" id="RHEA:20221"/>
        <dbReference type="ChEBI" id="CHEBI:15740"/>
        <dbReference type="ChEBI" id="CHEBI:30616"/>
        <dbReference type="ChEBI" id="CHEBI:43474"/>
        <dbReference type="ChEBI" id="CHEBI:57453"/>
        <dbReference type="ChEBI" id="CHEBI:195366"/>
        <dbReference type="ChEBI" id="CHEBI:456216"/>
        <dbReference type="EC" id="6.3.4.3"/>
    </reaction>
    <physiologicalReaction direction="left-to-right" evidence="11">
        <dbReference type="Rhea" id="RHEA:20222"/>
    </physiologicalReaction>
</comment>
<comment type="biophysicochemical properties">
    <kinetics>
        <KM evidence="6">500 uM for THF monoglutamate</KM>
        <KM evidence="6">16 uM for THF triglutamate</KM>
        <KM evidence="6">3.6 uM for THF pentaglutamate</KM>
    </kinetics>
</comment>
<comment type="pathway">
    <text evidence="6">One-carbon metabolism; tetrahydrofolate interconversion.</text>
</comment>
<comment type="subunit">
    <text evidence="6">Homodimer.</text>
</comment>
<comment type="subcellular location">
    <subcellularLocation>
        <location evidence="4">Mitochondrion</location>
    </subcellularLocation>
</comment>
<comment type="alternative products">
    <event type="alternative splicing"/>
    <isoform>
        <id>Q6UB35-1</id>
        <name>1</name>
        <sequence type="displayed"/>
    </isoform>
    <isoform>
        <id>Q6UB35-2</id>
        <name>2</name>
        <sequence type="described" ref="VSP_034565 VSP_034566"/>
    </isoform>
</comment>
<comment type="tissue specificity">
    <text evidence="4 5">Detected in most tissues, highest expression found in placenta, thymus and brain. Low expression is found in liver and skeletal muscle. Up-regulated in colon adenocarcinoma.</text>
</comment>
<comment type="domain">
    <text>This monofunctional enzyme consists of two major domains: an N-terminal inactive methylene-THF dehydrogenase and cyclohydrolase domain and an active larger formyl-THF synthetase C-terminal domain.</text>
</comment>
<comment type="miscellaneous">
    <text>May participate in the progression of colorectal cancer by conferring growth advantage. Could be a new molecular target for cancer therapy.</text>
</comment>
<comment type="similarity">
    <text evidence="9">In the N-terminal section; belongs to the tetrahydrofolate dehydrogenase/cyclohydrolase family.</text>
</comment>
<comment type="similarity">
    <text evidence="9">In the C-terminal section; belongs to the formate--tetrahydrofolate ligase family.</text>
</comment>
<comment type="caution">
    <text evidence="10">Was originally thought to be a trifunctional enzyme but only a formyltetrahydrofolate synthetase activity was detected and not a dehydrogenase/cyclohydrogenase activity.</text>
</comment>
<comment type="sequence caution" evidence="9">
    <conflict type="erroneous initiation">
        <sequence resource="EMBL-CDS" id="AAH08629"/>
    </conflict>
</comment>
<comment type="sequence caution" evidence="9">
    <conflict type="erroneous initiation">
        <sequence resource="EMBL-CDS" id="BAB15009"/>
    </conflict>
</comment>
<dbReference type="EC" id="6.3.4.3" evidence="6"/>
<dbReference type="EMBL" id="AY374130">
    <property type="protein sequence ID" value="AAQ82696.1"/>
    <property type="molecule type" value="mRNA"/>
</dbReference>
<dbReference type="EMBL" id="AY374131">
    <property type="protein sequence ID" value="AAQ82697.1"/>
    <property type="molecule type" value="mRNA"/>
</dbReference>
<dbReference type="EMBL" id="AB127387">
    <property type="protein sequence ID" value="BAD93193.1"/>
    <property type="molecule type" value="mRNA"/>
</dbReference>
<dbReference type="EMBL" id="CH471051">
    <property type="protein sequence ID" value="EAW47762.1"/>
    <property type="molecule type" value="Genomic_DNA"/>
</dbReference>
<dbReference type="EMBL" id="AL035086">
    <property type="status" value="NOT_ANNOTATED_CDS"/>
    <property type="molecule type" value="Genomic_DNA"/>
</dbReference>
<dbReference type="EMBL" id="AL133260">
    <property type="status" value="NOT_ANNOTATED_CDS"/>
    <property type="molecule type" value="Genomic_DNA"/>
</dbReference>
<dbReference type="EMBL" id="AL049694">
    <property type="status" value="NOT_ANNOTATED_CDS"/>
    <property type="molecule type" value="Genomic_DNA"/>
</dbReference>
<dbReference type="EMBL" id="AL117452">
    <property type="protein sequence ID" value="CAB55934.1"/>
    <property type="molecule type" value="mRNA"/>
</dbReference>
<dbReference type="EMBL" id="BC008629">
    <property type="protein sequence ID" value="AAH08629.1"/>
    <property type="status" value="ALT_INIT"/>
    <property type="molecule type" value="mRNA"/>
</dbReference>
<dbReference type="EMBL" id="BC017477">
    <property type="protein sequence ID" value="AAH17477.2"/>
    <property type="molecule type" value="mRNA"/>
</dbReference>
<dbReference type="EMBL" id="BC110319">
    <property type="protein sequence ID" value="AAI10320.1"/>
    <property type="molecule type" value="mRNA"/>
</dbReference>
<dbReference type="EMBL" id="AK024798">
    <property type="protein sequence ID" value="BAB15009.1"/>
    <property type="status" value="ALT_INIT"/>
    <property type="molecule type" value="mRNA"/>
</dbReference>
<dbReference type="CCDS" id="CCDS5228.1">
    <molecule id="Q6UB35-1"/>
</dbReference>
<dbReference type="CCDS" id="CCDS56457.1">
    <molecule id="Q6UB35-2"/>
</dbReference>
<dbReference type="PIR" id="T17244">
    <property type="entry name" value="T17244"/>
</dbReference>
<dbReference type="RefSeq" id="NP_001229696.1">
    <property type="nucleotide sequence ID" value="NM_001242767.1"/>
</dbReference>
<dbReference type="RefSeq" id="NP_001229697.1">
    <property type="nucleotide sequence ID" value="NM_001242768.1"/>
</dbReference>
<dbReference type="RefSeq" id="NP_001229698.1">
    <molecule id="Q6UB35-2"/>
    <property type="nucleotide sequence ID" value="NM_001242769.3"/>
</dbReference>
<dbReference type="RefSeq" id="NP_056255.2">
    <molecule id="Q6UB35-1"/>
    <property type="nucleotide sequence ID" value="NM_015440.4"/>
</dbReference>
<dbReference type="SMR" id="Q6UB35"/>
<dbReference type="BioGRID" id="117409">
    <property type="interactions" value="178"/>
</dbReference>
<dbReference type="FunCoup" id="Q6UB35">
    <property type="interactions" value="1458"/>
</dbReference>
<dbReference type="IntAct" id="Q6UB35">
    <property type="interactions" value="65"/>
</dbReference>
<dbReference type="MINT" id="Q6UB35"/>
<dbReference type="STRING" id="9606.ENSP00000478253"/>
<dbReference type="ChEMBL" id="CHEMBL4295869"/>
<dbReference type="GlyGen" id="Q6UB35">
    <property type="glycosylation" value="3 sites, 1 O-linked glycan (2 sites)"/>
</dbReference>
<dbReference type="iPTMnet" id="Q6UB35"/>
<dbReference type="PhosphoSitePlus" id="Q6UB35"/>
<dbReference type="SwissPalm" id="Q6UB35"/>
<dbReference type="BioMuta" id="MTHFD1L"/>
<dbReference type="DMDM" id="74749360"/>
<dbReference type="jPOST" id="Q6UB35"/>
<dbReference type="MassIVE" id="Q6UB35"/>
<dbReference type="PaxDb" id="9606-ENSP00000478253"/>
<dbReference type="PeptideAtlas" id="Q6UB35"/>
<dbReference type="ProteomicsDB" id="67402">
    <molecule id="Q6UB35-1"/>
</dbReference>
<dbReference type="ProteomicsDB" id="67403">
    <molecule id="Q6UB35-2"/>
</dbReference>
<dbReference type="Pumba" id="Q6UB35"/>
<dbReference type="Antibodypedia" id="33330">
    <property type="antibodies" value="156 antibodies from 28 providers"/>
</dbReference>
<dbReference type="DNASU" id="25902"/>
<dbReference type="Ensembl" id="ENST00000367307.8">
    <molecule id="Q6UB35-2"/>
    <property type="protein sequence ID" value="ENSP00000356276.4"/>
    <property type="gene ID" value="ENSG00000120254.16"/>
</dbReference>
<dbReference type="Ensembl" id="ENST00000367321.8">
    <molecule id="Q6UB35-1"/>
    <property type="protein sequence ID" value="ENSP00000356290.3"/>
    <property type="gene ID" value="ENSG00000120254.16"/>
</dbReference>
<dbReference type="GeneID" id="25902"/>
<dbReference type="KEGG" id="hsa:25902"/>
<dbReference type="MANE-Select" id="ENST00000367321.8">
    <property type="protein sequence ID" value="ENSP00000356290.3"/>
    <property type="RefSeq nucleotide sequence ID" value="NM_015440.5"/>
    <property type="RefSeq protein sequence ID" value="NP_056255.2"/>
</dbReference>
<dbReference type="UCSC" id="uc003qoa.4">
    <molecule id="Q6UB35-1"/>
    <property type="organism name" value="human"/>
</dbReference>
<dbReference type="AGR" id="HGNC:21055"/>
<dbReference type="CTD" id="25902"/>
<dbReference type="DisGeNET" id="25902"/>
<dbReference type="GeneCards" id="MTHFD1L"/>
<dbReference type="HGNC" id="HGNC:21055">
    <property type="gene designation" value="MTHFD1L"/>
</dbReference>
<dbReference type="HPA" id="ENSG00000120254">
    <property type="expression patterns" value="Low tissue specificity"/>
</dbReference>
<dbReference type="MIM" id="611427">
    <property type="type" value="gene"/>
</dbReference>
<dbReference type="neXtProt" id="NX_Q6UB35"/>
<dbReference type="OpenTargets" id="ENSG00000120254"/>
<dbReference type="PharmGKB" id="PA134927803"/>
<dbReference type="VEuPathDB" id="HostDB:ENSG00000120254"/>
<dbReference type="eggNOG" id="KOG4230">
    <property type="taxonomic scope" value="Eukaryota"/>
</dbReference>
<dbReference type="GeneTree" id="ENSGT00940000157477"/>
<dbReference type="HOGENOM" id="CLU_1011786_0_0_1"/>
<dbReference type="InParanoid" id="Q6UB35"/>
<dbReference type="OMA" id="KFWNLKC"/>
<dbReference type="OrthoDB" id="1845775at2759"/>
<dbReference type="PAN-GO" id="Q6UB35">
    <property type="GO annotations" value="3 GO annotations based on evolutionary models"/>
</dbReference>
<dbReference type="PhylomeDB" id="Q6UB35"/>
<dbReference type="TreeFam" id="TF300623"/>
<dbReference type="BRENDA" id="6.3.4.3">
    <property type="organism ID" value="2681"/>
</dbReference>
<dbReference type="PathwayCommons" id="Q6UB35"/>
<dbReference type="Reactome" id="R-HSA-196757">
    <property type="pathway name" value="Metabolism of folate and pterines"/>
</dbReference>
<dbReference type="SignaLink" id="Q6UB35"/>
<dbReference type="SIGNOR" id="Q6UB35"/>
<dbReference type="UniPathway" id="UPA00193"/>
<dbReference type="BioGRID-ORCS" id="25902">
    <property type="hits" value="21 hits in 1156 CRISPR screens"/>
</dbReference>
<dbReference type="CD-CODE" id="91857CE7">
    <property type="entry name" value="Nucleolus"/>
</dbReference>
<dbReference type="CD-CODE" id="FB4E32DD">
    <property type="entry name" value="Presynaptic clusters and postsynaptic densities"/>
</dbReference>
<dbReference type="ChiTaRS" id="MTHFD1L">
    <property type="organism name" value="human"/>
</dbReference>
<dbReference type="GeneWiki" id="MTHFD1L"/>
<dbReference type="GenomeRNAi" id="25902"/>
<dbReference type="Pharos" id="Q6UB35">
    <property type="development level" value="Tbio"/>
</dbReference>
<dbReference type="PRO" id="PR:Q6UB35"/>
<dbReference type="Proteomes" id="UP000005640">
    <property type="component" value="Chromosome 6"/>
</dbReference>
<dbReference type="RNAct" id="Q6UB35">
    <property type="molecule type" value="protein"/>
</dbReference>
<dbReference type="Bgee" id="ENSG00000120254">
    <property type="expression patterns" value="Expressed in right coronary artery and 168 other cell types or tissues"/>
</dbReference>
<dbReference type="ExpressionAtlas" id="Q6UB35">
    <property type="expression patterns" value="baseline and differential"/>
</dbReference>
<dbReference type="GO" id="GO:0005829">
    <property type="term" value="C:cytosol"/>
    <property type="evidence" value="ECO:0000318"/>
    <property type="project" value="GO_Central"/>
</dbReference>
<dbReference type="GO" id="GO:0016020">
    <property type="term" value="C:membrane"/>
    <property type="evidence" value="ECO:0007005"/>
    <property type="project" value="UniProtKB"/>
</dbReference>
<dbReference type="GO" id="GO:0005759">
    <property type="term" value="C:mitochondrial matrix"/>
    <property type="evidence" value="ECO:0000304"/>
    <property type="project" value="Reactome"/>
</dbReference>
<dbReference type="GO" id="GO:0005739">
    <property type="term" value="C:mitochondrion"/>
    <property type="evidence" value="ECO:0000314"/>
    <property type="project" value="BHF-UCL"/>
</dbReference>
<dbReference type="GO" id="GO:0005524">
    <property type="term" value="F:ATP binding"/>
    <property type="evidence" value="ECO:0000314"/>
    <property type="project" value="BHF-UCL"/>
</dbReference>
<dbReference type="GO" id="GO:0004329">
    <property type="term" value="F:formate-tetrahydrofolate ligase activity"/>
    <property type="evidence" value="ECO:0000314"/>
    <property type="project" value="BHF-UCL"/>
</dbReference>
<dbReference type="GO" id="GO:0004488">
    <property type="term" value="F:methylenetetrahydrofolate dehydrogenase (NADP+) activity"/>
    <property type="evidence" value="ECO:0007669"/>
    <property type="project" value="InterPro"/>
</dbReference>
<dbReference type="GO" id="GO:0042803">
    <property type="term" value="F:protein homodimerization activity"/>
    <property type="evidence" value="ECO:0000314"/>
    <property type="project" value="BHF-UCL"/>
</dbReference>
<dbReference type="GO" id="GO:0009257">
    <property type="term" value="P:10-formyltetrahydrofolate biosynthetic process"/>
    <property type="evidence" value="ECO:0000314"/>
    <property type="project" value="BHF-UCL"/>
</dbReference>
<dbReference type="GO" id="GO:0048702">
    <property type="term" value="P:embryonic neurocranium morphogenesis"/>
    <property type="evidence" value="ECO:0000250"/>
    <property type="project" value="BHF-UCL"/>
</dbReference>
<dbReference type="GO" id="GO:0048703">
    <property type="term" value="P:embryonic viscerocranium morphogenesis"/>
    <property type="evidence" value="ECO:0000250"/>
    <property type="project" value="BHF-UCL"/>
</dbReference>
<dbReference type="GO" id="GO:0006760">
    <property type="term" value="P:folic acid-containing compound metabolic process"/>
    <property type="evidence" value="ECO:0000314"/>
    <property type="project" value="BHF-UCL"/>
</dbReference>
<dbReference type="GO" id="GO:0015943">
    <property type="term" value="P:formate biosynthetic process"/>
    <property type="evidence" value="ECO:0007669"/>
    <property type="project" value="Ensembl"/>
</dbReference>
<dbReference type="GO" id="GO:0015942">
    <property type="term" value="P:formate metabolic process"/>
    <property type="evidence" value="ECO:0000314"/>
    <property type="project" value="BHF-UCL"/>
</dbReference>
<dbReference type="GO" id="GO:0001843">
    <property type="term" value="P:neural tube closure"/>
    <property type="evidence" value="ECO:0000250"/>
    <property type="project" value="BHF-UCL"/>
</dbReference>
<dbReference type="GO" id="GO:0035999">
    <property type="term" value="P:tetrahydrofolate interconversion"/>
    <property type="evidence" value="ECO:0007669"/>
    <property type="project" value="UniProtKB-UniPathway"/>
</dbReference>
<dbReference type="CDD" id="cd00477">
    <property type="entry name" value="FTHFS"/>
    <property type="match status" value="1"/>
</dbReference>
<dbReference type="CDD" id="cd05212">
    <property type="entry name" value="NAD_bind_m-THF_DH_Cyclohyd_like"/>
    <property type="match status" value="1"/>
</dbReference>
<dbReference type="FunFam" id="1.10.8.770:FF:000001">
    <property type="entry name" value="Methylenetetrahydrofolate dehydrogenase (NADP+ dependent) 1 like"/>
    <property type="match status" value="1"/>
</dbReference>
<dbReference type="FunFam" id="3.40.50.10860:FF:000013">
    <property type="entry name" value="Methylenetetrahydrofolate dehydrogenase (NADP+ dependent) 1 like"/>
    <property type="match status" value="1"/>
</dbReference>
<dbReference type="FunFam" id="3.40.50.300:FF:000556">
    <property type="entry name" value="Methylenetetrahydrofolate dehydrogenase (NADP+ dependent) 1 like"/>
    <property type="match status" value="1"/>
</dbReference>
<dbReference type="FunFam" id="3.40.50.300:FF:000627">
    <property type="entry name" value="Methylenetetrahydrofolate dehydrogenase (NADP+ dependent) 1 like"/>
    <property type="match status" value="1"/>
</dbReference>
<dbReference type="FunFam" id="3.40.50.720:FF:000239">
    <property type="entry name" value="monofunctional C1-tetrahydrofolate synthase, mitochondrial isoform X1"/>
    <property type="match status" value="1"/>
</dbReference>
<dbReference type="FunFam" id="3.10.410.10:FF:000001">
    <property type="entry name" value="Putative formate--tetrahydrofolate ligase"/>
    <property type="match status" value="1"/>
</dbReference>
<dbReference type="Gene3D" id="1.10.8.770">
    <property type="match status" value="1"/>
</dbReference>
<dbReference type="Gene3D" id="3.10.410.10">
    <property type="entry name" value="Formyltetrahydrofolate synthetase, domain 3"/>
    <property type="match status" value="1"/>
</dbReference>
<dbReference type="Gene3D" id="3.40.50.10860">
    <property type="entry name" value="Leucine Dehydrogenase, chain A, domain 1"/>
    <property type="match status" value="1"/>
</dbReference>
<dbReference type="Gene3D" id="3.40.50.720">
    <property type="entry name" value="NAD(P)-binding Rossmann-like Domain"/>
    <property type="match status" value="1"/>
</dbReference>
<dbReference type="Gene3D" id="3.40.50.300">
    <property type="entry name" value="P-loop containing nucleotide triphosphate hydrolases"/>
    <property type="match status" value="2"/>
</dbReference>
<dbReference type="HAMAP" id="MF_01543">
    <property type="entry name" value="FTHFS"/>
    <property type="match status" value="1"/>
</dbReference>
<dbReference type="InterPro" id="IPR046346">
    <property type="entry name" value="Aminoacid_DH-like_N_sf"/>
</dbReference>
<dbReference type="InterPro" id="IPR000559">
    <property type="entry name" value="Formate_THF_ligase"/>
</dbReference>
<dbReference type="InterPro" id="IPR020628">
    <property type="entry name" value="Formate_THF_ligase_CS"/>
</dbReference>
<dbReference type="InterPro" id="IPR036291">
    <property type="entry name" value="NAD(P)-bd_dom_sf"/>
</dbReference>
<dbReference type="InterPro" id="IPR027417">
    <property type="entry name" value="P-loop_NTPase"/>
</dbReference>
<dbReference type="InterPro" id="IPR000672">
    <property type="entry name" value="THF_DH/CycHdrlase"/>
</dbReference>
<dbReference type="InterPro" id="IPR020630">
    <property type="entry name" value="THF_DH/CycHdrlase_cat_dom"/>
</dbReference>
<dbReference type="InterPro" id="IPR020631">
    <property type="entry name" value="THF_DH/CycHdrlase_NAD-bd_dom"/>
</dbReference>
<dbReference type="PANTHER" id="PTHR48099">
    <property type="entry name" value="C-1-TETRAHYDROFOLATE SYNTHASE, CYTOPLASMIC-RELATED"/>
    <property type="match status" value="1"/>
</dbReference>
<dbReference type="PANTHER" id="PTHR48099:SF12">
    <property type="entry name" value="MONOFUNCTIONAL C1-TETRAHYDROFOLATE SYNTHASE, MITOCHONDRIAL"/>
    <property type="match status" value="1"/>
</dbReference>
<dbReference type="Pfam" id="PF01268">
    <property type="entry name" value="FTHFS"/>
    <property type="match status" value="1"/>
</dbReference>
<dbReference type="Pfam" id="PF00763">
    <property type="entry name" value="THF_DHG_CYH"/>
    <property type="match status" value="1"/>
</dbReference>
<dbReference type="Pfam" id="PF02882">
    <property type="entry name" value="THF_DHG_CYH_C"/>
    <property type="match status" value="1"/>
</dbReference>
<dbReference type="PRINTS" id="PR00085">
    <property type="entry name" value="THFDHDRGNASE"/>
</dbReference>
<dbReference type="SUPFAM" id="SSF53223">
    <property type="entry name" value="Aminoacid dehydrogenase-like, N-terminal domain"/>
    <property type="match status" value="1"/>
</dbReference>
<dbReference type="SUPFAM" id="SSF51735">
    <property type="entry name" value="NAD(P)-binding Rossmann-fold domains"/>
    <property type="match status" value="1"/>
</dbReference>
<dbReference type="SUPFAM" id="SSF52540">
    <property type="entry name" value="P-loop containing nucleoside triphosphate hydrolases"/>
    <property type="match status" value="1"/>
</dbReference>
<dbReference type="PROSITE" id="PS00721">
    <property type="entry name" value="FTHFS_1"/>
    <property type="match status" value="1"/>
</dbReference>
<dbReference type="PROSITE" id="PS00722">
    <property type="entry name" value="FTHFS_2"/>
    <property type="match status" value="1"/>
</dbReference>
<accession>Q6UB35</accession>
<accession>Q2TBF3</accession>
<accession>Q8WVW0</accession>
<accession>Q96HG8</accession>
<accession>Q9H789</accession>
<accession>Q9UFU8</accession>
<evidence type="ECO:0000250" key="1"/>
<evidence type="ECO:0000250" key="2">
    <source>
        <dbReference type="UniProtKB" id="Q3V3R1"/>
    </source>
</evidence>
<evidence type="ECO:0000256" key="3">
    <source>
        <dbReference type="SAM" id="MobiDB-lite"/>
    </source>
</evidence>
<evidence type="ECO:0000269" key="4">
    <source>
    </source>
</evidence>
<evidence type="ECO:0000269" key="5">
    <source>
    </source>
</evidence>
<evidence type="ECO:0000269" key="6">
    <source>
    </source>
</evidence>
<evidence type="ECO:0000269" key="7">
    <source>
    </source>
</evidence>
<evidence type="ECO:0000303" key="8">
    <source>
    </source>
</evidence>
<evidence type="ECO:0000305" key="9"/>
<evidence type="ECO:0000305" key="10">
    <source>
    </source>
</evidence>
<evidence type="ECO:0000305" key="11">
    <source>
    </source>
</evidence>
<evidence type="ECO:0000312" key="12">
    <source>
        <dbReference type="HGNC" id="HGNC:21055"/>
    </source>
</evidence>
<evidence type="ECO:0007744" key="13">
    <source>
    </source>
</evidence>
<evidence type="ECO:0007744" key="14">
    <source>
    </source>
</evidence>
<feature type="transit peptide" description="Mitochondrion" evidence="6">
    <location>
        <begin position="1"/>
        <end position="31"/>
    </location>
</feature>
<feature type="chain" id="PRO_0000343177" description="Monofunctional C1-tetrahydrofolate synthase, mitochondrial">
    <location>
        <begin position="32"/>
        <end position="978"/>
    </location>
</feature>
<feature type="region of interest" description="Disordered" evidence="3">
    <location>
        <begin position="1"/>
        <end position="71"/>
    </location>
</feature>
<feature type="region of interest" description="Methylenetetrahydrofolate dehydrogenase and cyclohydrolase">
    <location>
        <begin position="31"/>
        <end position="348"/>
    </location>
</feature>
<feature type="region of interest" description="Formyltetrahydrofolate synthetase">
    <location>
        <begin position="349"/>
        <end position="978"/>
    </location>
</feature>
<feature type="compositionally biased region" description="Low complexity" evidence="3">
    <location>
        <begin position="1"/>
        <end position="10"/>
    </location>
</feature>
<feature type="compositionally biased region" description="Gly residues" evidence="3">
    <location>
        <begin position="33"/>
        <end position="45"/>
    </location>
</feature>
<feature type="binding site" evidence="1">
    <location>
        <begin position="423"/>
        <end position="430"/>
    </location>
    <ligand>
        <name>ATP</name>
        <dbReference type="ChEBI" id="CHEBI:30616"/>
    </ligand>
</feature>
<feature type="modified residue" description="N6-acetyllysine; alternate" evidence="13">
    <location>
        <position position="189"/>
    </location>
</feature>
<feature type="modified residue" description="N6-succinyllysine; alternate" evidence="2">
    <location>
        <position position="189"/>
    </location>
</feature>
<feature type="modified residue" description="Phosphoserine" evidence="14">
    <location>
        <position position="357"/>
    </location>
</feature>
<feature type="modified residue" description="N6-succinyllysine" evidence="2">
    <location>
        <position position="596"/>
    </location>
</feature>
<feature type="splice variant" id="VSP_034565" description="In isoform 2." evidence="8">
    <original>LHEADIVVLGSPKPE</original>
    <variation>TESRSVTRLECRRVI</variation>
    <location>
        <begin position="261"/>
        <end position="275"/>
    </location>
</feature>
<feature type="splice variant" id="VSP_034566" description="In isoform 2." evidence="8">
    <location>
        <begin position="276"/>
        <end position="978"/>
    </location>
</feature>
<feature type="sequence variant" id="VAR_044346" description="In a colorectal cancer sample; somatic mutation." evidence="7">
    <original>L</original>
    <variation>R</variation>
    <location>
        <position position="444"/>
    </location>
</feature>
<feature type="sequence conflict" description="In Ref. 7; AAI10320." evidence="9" ref="7">
    <original>I</original>
    <variation>V</variation>
    <location>
        <position position="79"/>
    </location>
</feature>
<feature type="sequence conflict" description="In Ref. 9; BAB15009." evidence="9" ref="9">
    <original>R</original>
    <variation>M</variation>
    <location>
        <position position="870"/>
    </location>
</feature>
<protein>
    <recommendedName>
        <fullName evidence="11">Monofunctional C1-tetrahydrofolate synthase, mitochondrial</fullName>
        <ecNumber evidence="6">6.3.4.3</ecNumber>
    </recommendedName>
    <alternativeName>
        <fullName>Formyltetrahydrofolate synthetase</fullName>
    </alternativeName>
</protein>
<keyword id="KW-0007">Acetylation</keyword>
<keyword id="KW-0025">Alternative splicing</keyword>
<keyword id="KW-0067">ATP-binding</keyword>
<keyword id="KW-0903">Direct protein sequencing</keyword>
<keyword id="KW-0436">Ligase</keyword>
<keyword id="KW-0496">Mitochondrion</keyword>
<keyword id="KW-0547">Nucleotide-binding</keyword>
<keyword id="KW-0554">One-carbon metabolism</keyword>
<keyword id="KW-0597">Phosphoprotein</keyword>
<keyword id="KW-1267">Proteomics identification</keyword>
<keyword id="KW-1185">Reference proteome</keyword>
<keyword id="KW-0809">Transit peptide</keyword>
<proteinExistence type="evidence at protein level"/>